<comment type="function">
    <text evidence="2 10 12">Conjugation of reduced glutathione to a wide number of exogenous and endogenous hydrophobic electrophiles. The olfactory GST may be crucial for the acuity of the olfactory process (PubMed:8110735, PubMed:8664265). Participates in the formation of novel hepoxilin regioisomers (By similarity).</text>
</comment>
<comment type="catalytic activity">
    <reaction evidence="10 12">
        <text>RX + glutathione = an S-substituted glutathione + a halide anion + H(+)</text>
        <dbReference type="Rhea" id="RHEA:16437"/>
        <dbReference type="ChEBI" id="CHEBI:15378"/>
        <dbReference type="ChEBI" id="CHEBI:16042"/>
        <dbReference type="ChEBI" id="CHEBI:17792"/>
        <dbReference type="ChEBI" id="CHEBI:57925"/>
        <dbReference type="ChEBI" id="CHEBI:90779"/>
        <dbReference type="EC" id="2.5.1.18"/>
    </reaction>
    <physiologicalReaction direction="left-to-right" evidence="14 15">
        <dbReference type="Rhea" id="RHEA:16438"/>
    </physiologicalReaction>
</comment>
<comment type="catalytic activity">
    <reaction evidence="2">
        <text>prostaglandin A2 + glutathione = prostaglandin A2-S-(R)-glutathione</text>
        <dbReference type="Rhea" id="RHEA:50796"/>
        <dbReference type="ChEBI" id="CHEBI:57925"/>
        <dbReference type="ChEBI" id="CHEBI:133370"/>
        <dbReference type="ChEBI" id="CHEBI:133768"/>
    </reaction>
    <physiologicalReaction direction="left-to-right" evidence="2">
        <dbReference type="Rhea" id="RHEA:50797"/>
    </physiologicalReaction>
</comment>
<comment type="catalytic activity">
    <reaction evidence="2">
        <text>prostaglandin J2 + glutathione = prostaglandin J2-S-(R)-glutathione</text>
        <dbReference type="Rhea" id="RHEA:50804"/>
        <dbReference type="ChEBI" id="CHEBI:57925"/>
        <dbReference type="ChEBI" id="CHEBI:133396"/>
        <dbReference type="ChEBI" id="CHEBI:133771"/>
    </reaction>
    <physiologicalReaction direction="left-to-right" evidence="2">
        <dbReference type="Rhea" id="RHEA:50805"/>
    </physiologicalReaction>
</comment>
<comment type="catalytic activity">
    <reaction evidence="2">
        <text>prostaglandin J2 + glutathione = prostaglandin J2-S-(S)-glutathione</text>
        <dbReference type="Rhea" id="RHEA:50808"/>
        <dbReference type="ChEBI" id="CHEBI:57925"/>
        <dbReference type="ChEBI" id="CHEBI:133396"/>
        <dbReference type="ChEBI" id="CHEBI:133772"/>
    </reaction>
    <physiologicalReaction direction="left-to-right" evidence="2">
        <dbReference type="Rhea" id="RHEA:50809"/>
    </physiologicalReaction>
</comment>
<comment type="catalytic activity">
    <reaction evidence="2">
        <text>prostaglandin A2 + glutathione = prostaglandin A2-S-(S)-glutathione</text>
        <dbReference type="Rhea" id="RHEA:50800"/>
        <dbReference type="ChEBI" id="CHEBI:57925"/>
        <dbReference type="ChEBI" id="CHEBI:133370"/>
        <dbReference type="ChEBI" id="CHEBI:133769"/>
    </reaction>
    <physiologicalReaction direction="left-to-right" evidence="2">
        <dbReference type="Rhea" id="RHEA:50801"/>
    </physiologicalReaction>
</comment>
<comment type="catalytic activity">
    <reaction evidence="2">
        <text>11(S)-hydroxy-14(S),15(S)-epoxy-(5Z,8Z,12E)-eicosatrienoate + glutathione = (11S,15S)-dihydroxy-14(R)-S-glutathionyl-(5Z,8Z,12E)-eicosatrienoate</text>
        <dbReference type="Rhea" id="RHEA:50260"/>
        <dbReference type="ChEBI" id="CHEBI:57925"/>
        <dbReference type="ChEBI" id="CHEBI:132200"/>
        <dbReference type="ChEBI" id="CHEBI:132201"/>
    </reaction>
    <physiologicalReaction direction="left-to-right" evidence="2">
        <dbReference type="Rhea" id="RHEA:50261"/>
    </physiologicalReaction>
</comment>
<comment type="subunit">
    <text evidence="4 8 10">Homodimer or heterodimer.</text>
</comment>
<comment type="subcellular location">
    <subcellularLocation>
        <location>Cytoplasm</location>
    </subcellularLocation>
</comment>
<comment type="miscellaneous">
    <text>Yb subclass selectively binds steroid hormones.</text>
</comment>
<comment type="similarity">
    <text evidence="13">Belongs to the GST superfamily. Mu family.</text>
</comment>
<keyword id="KW-0002">3D-structure</keyword>
<keyword id="KW-0963">Cytoplasm</keyword>
<keyword id="KW-0903">Direct protein sequencing</keyword>
<keyword id="KW-0443">Lipid metabolism</keyword>
<keyword id="KW-0552">Olfaction</keyword>
<keyword id="KW-0597">Phosphoprotein</keyword>
<keyword id="KW-1185">Reference proteome</keyword>
<keyword id="KW-0716">Sensory transduction</keyword>
<keyword id="KW-0808">Transferase</keyword>
<accession>P04905</accession>
<reference key="1">
    <citation type="journal article" date="1986" name="Nucleic Acids Res.">
        <title>Cloning and sequence analysis of a cDNA for a rat liver glutathione S-transferase Yb subunit.</title>
        <authorList>
            <person name="Lai H.-C.J."/>
            <person name="Grove G."/>
            <person name="Tu C.-P.D."/>
        </authorList>
    </citation>
    <scope>NUCLEOTIDE SEQUENCE [MRNA]</scope>
</reference>
<reference key="2">
    <citation type="journal article" date="1985" name="J. Biol. Chem.">
        <title>Rat liver glutathione S-transferases. Nucleotide sequence analysis of a Yb1 cDNA clone and prediction of the complete amino acid sequence of the Yb1 subunit.</title>
        <authorList>
            <person name="Ding G.J.-F."/>
            <person name="Lu A.Y.H."/>
            <person name="Pickett C.B."/>
        </authorList>
    </citation>
    <scope>NUCLEOTIDE SEQUENCE [MRNA]</scope>
</reference>
<reference key="3">
    <citation type="journal article" date="1986" name="J. Biol. Chem.">
        <title>Rat liver glutathione S-transferases. DNA sequence analysis of a Yb2 cDNA clone and regulation of the Yb1 and Yb2 mRNAs by phenobarbital.</title>
        <authorList>
            <person name="Ding G.J.-F."/>
            <person name="Ding V.D.-H."/>
            <person name="Rodkey J.A."/>
            <person name="Bennett C.D."/>
            <person name="Lu A.Y.H."/>
            <person name="Pickett C.B."/>
        </authorList>
    </citation>
    <scope>NUCLEOTIDE SEQUENCE [MRNA]</scope>
    <scope>PROTEIN SEQUENCE OF 2-24</scope>
    <scope>SUBUNIT</scope>
</reference>
<reference key="4">
    <citation type="journal article" date="1987" name="J. Biol. Chem.">
        <title>Identification of glutathione S-transferase Yb1 mRNA as the androgen-repressed mRNA by cDNA cloning and sequence analysis.</title>
        <authorList>
            <person name="Chang C."/>
            <person name="Saltzman A.G."/>
            <person name="Sorensen N.S."/>
            <person name="Hiipakka R.A."/>
            <person name="Liao S."/>
        </authorList>
    </citation>
    <scope>NUCLEOTIDE SEQUENCE [MRNA]</scope>
</reference>
<reference key="5">
    <citation type="journal article" date="2004" name="Genome Res.">
        <title>The status, quality, and expansion of the NIH full-length cDNA project: the Mammalian Gene Collection (MGC).</title>
        <authorList>
            <consortium name="The MGC Project Team"/>
        </authorList>
    </citation>
    <scope>NUCLEOTIDE SEQUENCE [LARGE SCALE MRNA]</scope>
    <source>
        <tissue>Pituitary</tissue>
    </source>
</reference>
<reference key="6">
    <citation type="journal article" date="1992" name="Arch. Biochem. Biophys.">
        <title>Identification of Tyr115 labeled by S-(4-bromo-2,3-dioxobutyl)glutathione in the hydrophobic substrate binding site of glutathione S-transferase, isoenzyme 3-3.</title>
        <authorList>
            <person name="Katusz R.M."/>
            <person name="Bono B."/>
            <person name="Colman R.F."/>
        </authorList>
    </citation>
    <scope>PROTEIN SEQUENCE OF 2-20; 83-96 AND 109-122</scope>
</reference>
<reference key="7">
    <citation type="journal article" date="1989" name="Biochem. Biophys. Res. Commun.">
        <title>Expression of Yb1 glutathione S-transferase using a baculovirus expression system.</title>
        <authorList>
            <person name="Hsieh J.C."/>
            <person name="Liu L.F."/>
            <person name="Chen W.L."/>
            <person name="Tam M.F."/>
        </authorList>
    </citation>
    <scope>PROTEIN SEQUENCE OF 2-21 AND 212-218</scope>
</reference>
<reference key="8">
    <citation type="journal article" date="1990" name="Electrophoresis">
        <title>Identification of rat liver glutathione S-transferase Yb subunits by partial N-terminal sequencing after electroblotting of proteins onto a polyvinylidene difluoride membrane from an analytical isoelectric focusing gel.</title>
        <authorList>
            <person name="Chang L.H."/>
            <person name="Hsieh J.C."/>
            <person name="Chen W.L."/>
            <person name="Tam M.F."/>
        </authorList>
    </citation>
    <scope>PROTEIN SEQUENCE OF 2-26</scope>
</reference>
<reference key="9">
    <citation type="journal article" date="1993" name="Biochem. J.">
        <title>Glutathione S-transferases in rat olfactory epithelium: purification, molecular properties and odorant biotransformation.</title>
        <authorList>
            <person name="Ben-Arie N."/>
            <person name="Khen M."/>
            <person name="Lancet D."/>
        </authorList>
    </citation>
    <scope>PROTEIN SEQUENCE OF 2-24</scope>
    <source>
        <strain>Wistar</strain>
        <tissue>Olfactory epithelium</tissue>
    </source>
</reference>
<reference key="10">
    <citation type="journal article" date="1985" name="Proc. Natl. Acad. Sci. U.S.A.">
        <title>Identification of three classes of cytosolic glutathione transferase common to several mammalian species: correlation between structural data and enzymatic properties.</title>
        <authorList>
            <person name="Mannervik B."/>
            <person name="Alin P."/>
            <person name="Guthenberg C."/>
            <person name="Jensson H."/>
            <person name="Tahir M.K."/>
            <person name="Warholm M."/>
            <person name="Joernvall H."/>
        </authorList>
    </citation>
    <scope>PROTEIN SEQUENCE OF 2-20</scope>
</reference>
<reference key="11">
    <citation type="submission" date="2007-07" db="UniProtKB">
        <authorList>
            <person name="Lubec G."/>
            <person name="Chen W.-Q."/>
            <person name="Kang S.U."/>
        </authorList>
    </citation>
    <scope>PROTEIN SEQUENCE OF 19-32; 33-50; 53-68; 70-78; 97-108; 137-144; 174-187 AND 203-218</scope>
    <scope>IDENTIFICATION BY MASS SPECTROMETRY</scope>
    <source>
        <strain>Sprague-Dawley</strain>
        <tissue>Brain</tissue>
        <tissue>Hippocampus</tissue>
    </source>
</reference>
<reference key="12">
    <citation type="journal article" date="1991" name="Biochem. J.">
        <title>Cysteine-86 is not needed for the enzymic activity of glutathione S-transferase 3-3.</title>
        <authorList>
            <person name="Hsieh J.-C."/>
            <person name="Huang S.-C."/>
            <person name="Chen W.-L."/>
            <person name="Lai Y.-C."/>
            <person name="Tam M.F."/>
        </authorList>
    </citation>
    <scope>MUTAGENESIS OF CYS-87</scope>
</reference>
<reference key="13">
    <citation type="journal article" date="2012" name="Nat. Commun.">
        <title>Quantitative maps of protein phosphorylation sites across 14 different rat organs and tissues.</title>
        <authorList>
            <person name="Lundby A."/>
            <person name="Secher A."/>
            <person name="Lage K."/>
            <person name="Nordsborg N.B."/>
            <person name="Dmytriyev A."/>
            <person name="Lundby C."/>
            <person name="Olsen J.V."/>
        </authorList>
    </citation>
    <scope>PHOSPHORYLATION [LARGE SCALE ANALYSIS] AT SER-67; SER-205 AND SER-210</scope>
    <scope>IDENTIFICATION BY MASS SPECTROMETRY [LARGE SCALE ANALYSIS]</scope>
</reference>
<reference key="14">
    <citation type="journal article" date="1992" name="Biochemistry">
        <title>The three-dimensional structure of a glutathione S-transferase from the mu gene class. Structural analysis of the binary complex of isoenzyme 3-3 and glutathione at 2.2-A resolution.</title>
        <authorList>
            <person name="Ji X."/>
            <person name="Zhang P."/>
            <person name="Armstrong R.N."/>
            <person name="Gilliland G.L."/>
        </authorList>
    </citation>
    <scope>X-RAY CRYSTALLOGRAPHY (2.2 ANGSTROMS) IN COMPLEX WITH GLUTATHIONE</scope>
</reference>
<reference key="15">
    <citation type="journal article" date="1994" name="Acta Crystallogr. D">
        <title>New crystal forms of a mu-class glutathione S-transferase from rat liver.</title>
        <authorList>
            <person name="Fu J.-H."/>
            <person name="Rose J."/>
            <person name="Tam M.F."/>
            <person name="Wang B.-C."/>
        </authorList>
    </citation>
    <scope>X-RAY CRYSTALLOGRAPHY (2.5 ANGSTROMS)</scope>
</reference>
<reference key="16">
    <citation type="journal article" date="1994" name="Biochemistry">
        <title>Structure and function of the xenobiotic substrate binding site of a glutathione S-transferase as revealed by X-ray crystallographic analysis of product complexes with the diastereomers of 9-(S-glutathionyl)-10-hydroxy-9,10-dihydrophenanthrene.</title>
        <authorList>
            <person name="Ji X."/>
            <person name="Johnson W.W."/>
            <person name="Sesay M.A."/>
            <person name="Dickert L."/>
            <person name="Prasad S.M."/>
            <person name="Ammon H.L."/>
            <person name="Armstrong R.N."/>
            <person name="Gilliland G.L."/>
        </authorList>
    </citation>
    <scope>X-RAY CRYSTALLOGRAPHY (1.8 ANGSTROMS) IN COMPLEXES WITH GLUTATHIONE ANALOGS</scope>
    <scope>CATALYTIC ACTIVITY</scope>
    <scope>MUTAGENESIS OF TYR-116</scope>
</reference>
<reference key="17">
    <citation type="journal article" date="1996" name="Biochemistry">
        <title>First-sphere and second-sphere electrostatic effects in the active site of a class mu gluthathione transferase.</title>
        <authorList>
            <person name="Xiao G."/>
            <person name="Liu S."/>
            <person name="Ji X."/>
            <person name="Johnson W.W."/>
            <person name="Chen J."/>
            <person name="Parsons J.F."/>
            <person name="Stevens W.J."/>
            <person name="Gilliland G.L."/>
            <person name="Armstrong R.N."/>
        </authorList>
    </citation>
    <scope>X-RAY CRYSTALLOGRAPHY (1.75 ANGSTROMS) OF MUTANT PHE-7 IN COMPLEXES WITH GLUTATHIONE</scope>
    <scope>CATALYTIC ACTIVITY</scope>
    <scope>MUTAGENESIS OF TYR-7</scope>
</reference>
<organism>
    <name type="scientific">Rattus norvegicus</name>
    <name type="common">Rat</name>
    <dbReference type="NCBI Taxonomy" id="10116"/>
    <lineage>
        <taxon>Eukaryota</taxon>
        <taxon>Metazoa</taxon>
        <taxon>Chordata</taxon>
        <taxon>Craniata</taxon>
        <taxon>Vertebrata</taxon>
        <taxon>Euteleostomi</taxon>
        <taxon>Mammalia</taxon>
        <taxon>Eutheria</taxon>
        <taxon>Euarchontoglires</taxon>
        <taxon>Glires</taxon>
        <taxon>Rodentia</taxon>
        <taxon>Myomorpha</taxon>
        <taxon>Muroidea</taxon>
        <taxon>Muridae</taxon>
        <taxon>Murinae</taxon>
        <taxon>Rattus</taxon>
    </lineage>
</organism>
<proteinExistence type="evidence at protein level"/>
<gene>
    <name evidence="16" type="primary">Gstm1</name>
</gene>
<dbReference type="EC" id="2.5.1.18" evidence="2"/>
<dbReference type="EMBL" id="X04229">
    <property type="protein sequence ID" value="CAA27811.1"/>
    <property type="molecule type" value="mRNA"/>
</dbReference>
<dbReference type="EMBL" id="M11719">
    <property type="protein sequence ID" value="AAA41287.1"/>
    <property type="molecule type" value="mRNA"/>
</dbReference>
<dbReference type="EMBL" id="J02810">
    <property type="protein sequence ID" value="AAA41293.1"/>
    <property type="molecule type" value="mRNA"/>
</dbReference>
<dbReference type="EMBL" id="BC063172">
    <property type="protein sequence ID" value="AAH63172.1"/>
    <property type="molecule type" value="mRNA"/>
</dbReference>
<dbReference type="PIR" id="A29794">
    <property type="entry name" value="A29794"/>
</dbReference>
<dbReference type="RefSeq" id="NP_058710.1">
    <property type="nucleotide sequence ID" value="NM_017014.1"/>
</dbReference>
<dbReference type="PDB" id="1GSB">
    <property type="method" value="X-ray"/>
    <property type="resolution" value="2.50 A"/>
    <property type="chains" value="A/B/C/D=2-218"/>
</dbReference>
<dbReference type="PDB" id="1GSC">
    <property type="method" value="X-ray"/>
    <property type="resolution" value="2.50 A"/>
    <property type="chains" value="A/B/C/D=2-218"/>
</dbReference>
<dbReference type="PDB" id="1MTC">
    <property type="method" value="X-ray"/>
    <property type="resolution" value="2.20 A"/>
    <property type="chains" value="A/B=2-218"/>
</dbReference>
<dbReference type="PDB" id="2GST">
    <property type="method" value="X-ray"/>
    <property type="resolution" value="1.80 A"/>
    <property type="chains" value="A/B=2-218"/>
</dbReference>
<dbReference type="PDB" id="3FYG">
    <property type="method" value="X-ray"/>
    <property type="resolution" value="2.20 A"/>
    <property type="chains" value="A/B=2-218"/>
</dbReference>
<dbReference type="PDB" id="3GST">
    <property type="method" value="X-ray"/>
    <property type="resolution" value="1.90 A"/>
    <property type="chains" value="A/B=2-218"/>
</dbReference>
<dbReference type="PDB" id="4GST">
    <property type="method" value="X-ray"/>
    <property type="resolution" value="1.90 A"/>
    <property type="chains" value="A/B=2-218"/>
</dbReference>
<dbReference type="PDB" id="5FWG">
    <property type="method" value="X-ray"/>
    <property type="resolution" value="2.00 A"/>
    <property type="chains" value="A/B=2-218"/>
</dbReference>
<dbReference type="PDB" id="5GST">
    <property type="method" value="X-ray"/>
    <property type="resolution" value="2.00 A"/>
    <property type="chains" value="A/B=2-218"/>
</dbReference>
<dbReference type="PDB" id="6GST">
    <property type="method" value="X-ray"/>
    <property type="resolution" value="2.20 A"/>
    <property type="chains" value="A/B=2-218"/>
</dbReference>
<dbReference type="PDB" id="6GSU">
    <property type="method" value="X-ray"/>
    <property type="resolution" value="1.85 A"/>
    <property type="chains" value="A/B=2-218"/>
</dbReference>
<dbReference type="PDB" id="6GSV">
    <property type="method" value="X-ray"/>
    <property type="resolution" value="1.75 A"/>
    <property type="chains" value="A/B=2-218"/>
</dbReference>
<dbReference type="PDB" id="6GSW">
    <property type="method" value="X-ray"/>
    <property type="resolution" value="1.85 A"/>
    <property type="chains" value="A/B=2-218"/>
</dbReference>
<dbReference type="PDB" id="6GSX">
    <property type="method" value="X-ray"/>
    <property type="resolution" value="1.91 A"/>
    <property type="chains" value="A/B=2-218"/>
</dbReference>
<dbReference type="PDB" id="6GSY">
    <property type="method" value="X-ray"/>
    <property type="resolution" value="2.20 A"/>
    <property type="chains" value="A/B=2-218"/>
</dbReference>
<dbReference type="PDBsum" id="1GSB"/>
<dbReference type="PDBsum" id="1GSC"/>
<dbReference type="PDBsum" id="1MTC"/>
<dbReference type="PDBsum" id="2GST"/>
<dbReference type="PDBsum" id="3FYG"/>
<dbReference type="PDBsum" id="3GST"/>
<dbReference type="PDBsum" id="4GST"/>
<dbReference type="PDBsum" id="5FWG"/>
<dbReference type="PDBsum" id="5GST"/>
<dbReference type="PDBsum" id="6GST"/>
<dbReference type="PDBsum" id="6GSU"/>
<dbReference type="PDBsum" id="6GSV"/>
<dbReference type="PDBsum" id="6GSW"/>
<dbReference type="PDBsum" id="6GSX"/>
<dbReference type="PDBsum" id="6GSY"/>
<dbReference type="SMR" id="P04905"/>
<dbReference type="BioGRID" id="246588">
    <property type="interactions" value="3"/>
</dbReference>
<dbReference type="FunCoup" id="P04905">
    <property type="interactions" value="164"/>
</dbReference>
<dbReference type="IntAct" id="P04905">
    <property type="interactions" value="1"/>
</dbReference>
<dbReference type="STRING" id="10116.ENSRNOP00000039050"/>
<dbReference type="ChEMBL" id="CHEMBL2209"/>
<dbReference type="iPTMnet" id="P04905"/>
<dbReference type="PhosphoSitePlus" id="P04905"/>
<dbReference type="SwissPalm" id="P04905"/>
<dbReference type="jPOST" id="P04905"/>
<dbReference type="PaxDb" id="10116-ENSRNOP00000039050"/>
<dbReference type="GeneID" id="24423"/>
<dbReference type="KEGG" id="rno:24423"/>
<dbReference type="UCSC" id="RGD:2755">
    <property type="organism name" value="rat"/>
</dbReference>
<dbReference type="AGR" id="RGD:2755"/>
<dbReference type="CTD" id="2944"/>
<dbReference type="RGD" id="2755">
    <property type="gene designation" value="Gstm1"/>
</dbReference>
<dbReference type="eggNOG" id="KOG1695">
    <property type="taxonomic scope" value="Eukaryota"/>
</dbReference>
<dbReference type="InParanoid" id="P04905"/>
<dbReference type="OrthoDB" id="4951845at2759"/>
<dbReference type="PhylomeDB" id="P04905"/>
<dbReference type="BRENDA" id="2.5.1.18">
    <property type="organism ID" value="5301"/>
</dbReference>
<dbReference type="Reactome" id="R-RNO-156590">
    <property type="pathway name" value="Glutathione conjugation"/>
</dbReference>
<dbReference type="EvolutionaryTrace" id="P04905"/>
<dbReference type="PRO" id="PR:P04905"/>
<dbReference type="Proteomes" id="UP000002494">
    <property type="component" value="Unplaced"/>
</dbReference>
<dbReference type="GO" id="GO:0005737">
    <property type="term" value="C:cytoplasm"/>
    <property type="evidence" value="ECO:0000266"/>
    <property type="project" value="RGD"/>
</dbReference>
<dbReference type="GO" id="GO:0005829">
    <property type="term" value="C:cytosol"/>
    <property type="evidence" value="ECO:0000314"/>
    <property type="project" value="CAFA"/>
</dbReference>
<dbReference type="GO" id="GO:0005576">
    <property type="term" value="C:extracellular region"/>
    <property type="evidence" value="ECO:0000314"/>
    <property type="project" value="RGD"/>
</dbReference>
<dbReference type="GO" id="GO:0005739">
    <property type="term" value="C:mitochondrion"/>
    <property type="evidence" value="ECO:0000266"/>
    <property type="project" value="RGD"/>
</dbReference>
<dbReference type="GO" id="GO:0032991">
    <property type="term" value="C:protein-containing complex"/>
    <property type="evidence" value="ECO:0000314"/>
    <property type="project" value="RGD"/>
</dbReference>
<dbReference type="GO" id="GO:0019899">
    <property type="term" value="F:enzyme binding"/>
    <property type="evidence" value="ECO:0000266"/>
    <property type="project" value="RGD"/>
</dbReference>
<dbReference type="GO" id="GO:0043295">
    <property type="term" value="F:glutathione binding"/>
    <property type="evidence" value="ECO:0000314"/>
    <property type="project" value="CAFA"/>
</dbReference>
<dbReference type="GO" id="GO:0004364">
    <property type="term" value="F:glutathione transferase activity"/>
    <property type="evidence" value="ECO:0000314"/>
    <property type="project" value="CAFA"/>
</dbReference>
<dbReference type="GO" id="GO:0042802">
    <property type="term" value="F:identical protein binding"/>
    <property type="evidence" value="ECO:0000353"/>
    <property type="project" value="RGD"/>
</dbReference>
<dbReference type="GO" id="GO:0016151">
    <property type="term" value="F:nickel cation binding"/>
    <property type="evidence" value="ECO:0000314"/>
    <property type="project" value="RGD"/>
</dbReference>
<dbReference type="GO" id="GO:0042803">
    <property type="term" value="F:protein homodimerization activity"/>
    <property type="evidence" value="ECO:0000266"/>
    <property type="project" value="RGD"/>
</dbReference>
<dbReference type="GO" id="GO:0019901">
    <property type="term" value="F:protein kinase binding"/>
    <property type="evidence" value="ECO:0000353"/>
    <property type="project" value="RGD"/>
</dbReference>
<dbReference type="GO" id="GO:0005496">
    <property type="term" value="F:steroid binding"/>
    <property type="evidence" value="ECO:0000353"/>
    <property type="project" value="RGD"/>
</dbReference>
<dbReference type="GO" id="GO:0070458">
    <property type="term" value="P:cellular detoxification of nitrogen compound"/>
    <property type="evidence" value="ECO:0000266"/>
    <property type="project" value="RGD"/>
</dbReference>
<dbReference type="GO" id="GO:0071466">
    <property type="term" value="P:cellular response to xenobiotic stimulus"/>
    <property type="evidence" value="ECO:0000266"/>
    <property type="project" value="RGD"/>
</dbReference>
<dbReference type="GO" id="GO:1901687">
    <property type="term" value="P:glutathione derivative biosynthetic process"/>
    <property type="evidence" value="ECO:0000250"/>
    <property type="project" value="UniProtKB"/>
</dbReference>
<dbReference type="GO" id="GO:0006749">
    <property type="term" value="P:glutathione metabolic process"/>
    <property type="evidence" value="ECO:0000314"/>
    <property type="project" value="UniProtKB"/>
</dbReference>
<dbReference type="GO" id="GO:0051122">
    <property type="term" value="P:hepoxilin biosynthetic process"/>
    <property type="evidence" value="ECO:0000250"/>
    <property type="project" value="UniProtKB"/>
</dbReference>
<dbReference type="GO" id="GO:0018916">
    <property type="term" value="P:nitrobenzene metabolic process"/>
    <property type="evidence" value="ECO:0000266"/>
    <property type="project" value="RGD"/>
</dbReference>
<dbReference type="GO" id="GO:0006693">
    <property type="term" value="P:prostaglandin metabolic process"/>
    <property type="evidence" value="ECO:0000250"/>
    <property type="project" value="UniProtKB"/>
</dbReference>
<dbReference type="GO" id="GO:0043200">
    <property type="term" value="P:response to amino acid"/>
    <property type="evidence" value="ECO:0000270"/>
    <property type="project" value="RGD"/>
</dbReference>
<dbReference type="GO" id="GO:0048678">
    <property type="term" value="P:response to axon injury"/>
    <property type="evidence" value="ECO:0000270"/>
    <property type="project" value="RGD"/>
</dbReference>
<dbReference type="GO" id="GO:0045471">
    <property type="term" value="P:response to ethanol"/>
    <property type="evidence" value="ECO:0000270"/>
    <property type="project" value="RGD"/>
</dbReference>
<dbReference type="GO" id="GO:0010288">
    <property type="term" value="P:response to lead ion"/>
    <property type="evidence" value="ECO:0000270"/>
    <property type="project" value="RGD"/>
</dbReference>
<dbReference type="GO" id="GO:0010038">
    <property type="term" value="P:response to metal ion"/>
    <property type="evidence" value="ECO:0000270"/>
    <property type="project" value="RGD"/>
</dbReference>
<dbReference type="GO" id="GO:0007608">
    <property type="term" value="P:sensory perception of smell"/>
    <property type="evidence" value="ECO:0007669"/>
    <property type="project" value="UniProtKB-KW"/>
</dbReference>
<dbReference type="GO" id="GO:0042178">
    <property type="term" value="P:xenobiotic catabolic process"/>
    <property type="evidence" value="ECO:0000314"/>
    <property type="project" value="CAFA"/>
</dbReference>
<dbReference type="CDD" id="cd03209">
    <property type="entry name" value="GST_C_Mu"/>
    <property type="match status" value="1"/>
</dbReference>
<dbReference type="CDD" id="cd03075">
    <property type="entry name" value="GST_N_Mu"/>
    <property type="match status" value="1"/>
</dbReference>
<dbReference type="FunFam" id="1.20.1050.10:FF:000083">
    <property type="entry name" value="Glutathione S-transferase Mu 1"/>
    <property type="match status" value="1"/>
</dbReference>
<dbReference type="FunFam" id="3.40.30.10:FF:000603">
    <property type="entry name" value="Glutathione S-transferase Mu 1"/>
    <property type="match status" value="1"/>
</dbReference>
<dbReference type="Gene3D" id="1.20.1050.10">
    <property type="match status" value="1"/>
</dbReference>
<dbReference type="Gene3D" id="3.40.30.10">
    <property type="entry name" value="Glutaredoxin"/>
    <property type="match status" value="1"/>
</dbReference>
<dbReference type="InterPro" id="IPR010987">
    <property type="entry name" value="Glutathione-S-Trfase_C-like"/>
</dbReference>
<dbReference type="InterPro" id="IPR036282">
    <property type="entry name" value="Glutathione-S-Trfase_C_sf"/>
</dbReference>
<dbReference type="InterPro" id="IPR004045">
    <property type="entry name" value="Glutathione_S-Trfase_N"/>
</dbReference>
<dbReference type="InterPro" id="IPR004046">
    <property type="entry name" value="GST_C"/>
</dbReference>
<dbReference type="InterPro" id="IPR003081">
    <property type="entry name" value="GST_mu"/>
</dbReference>
<dbReference type="InterPro" id="IPR050213">
    <property type="entry name" value="GST_superfamily"/>
</dbReference>
<dbReference type="InterPro" id="IPR036249">
    <property type="entry name" value="Thioredoxin-like_sf"/>
</dbReference>
<dbReference type="PANTHER" id="PTHR11571">
    <property type="entry name" value="GLUTATHIONE S-TRANSFERASE"/>
    <property type="match status" value="1"/>
</dbReference>
<dbReference type="PANTHER" id="PTHR11571:SF126">
    <property type="entry name" value="GLUTATHIONE S-TRANSFERASE MU 1-RELATED"/>
    <property type="match status" value="1"/>
</dbReference>
<dbReference type="Pfam" id="PF00043">
    <property type="entry name" value="GST_C"/>
    <property type="match status" value="1"/>
</dbReference>
<dbReference type="Pfam" id="PF02798">
    <property type="entry name" value="GST_N"/>
    <property type="match status" value="1"/>
</dbReference>
<dbReference type="PRINTS" id="PR01267">
    <property type="entry name" value="GSTRNSFRASEM"/>
</dbReference>
<dbReference type="SFLD" id="SFLDG01205">
    <property type="entry name" value="AMPS.1"/>
    <property type="match status" value="1"/>
</dbReference>
<dbReference type="SFLD" id="SFLDG00363">
    <property type="entry name" value="AMPS_(cytGST):_Alpha-__Mu-__Pi"/>
    <property type="match status" value="1"/>
</dbReference>
<dbReference type="SUPFAM" id="SSF47616">
    <property type="entry name" value="GST C-terminal domain-like"/>
    <property type="match status" value="1"/>
</dbReference>
<dbReference type="SUPFAM" id="SSF52833">
    <property type="entry name" value="Thioredoxin-like"/>
    <property type="match status" value="1"/>
</dbReference>
<dbReference type="PROSITE" id="PS50405">
    <property type="entry name" value="GST_CTER"/>
    <property type="match status" value="1"/>
</dbReference>
<dbReference type="PROSITE" id="PS50404">
    <property type="entry name" value="GST_NTER"/>
    <property type="match status" value="1"/>
</dbReference>
<protein>
    <recommendedName>
        <fullName evidence="13">Glutathione S-transferase Mu 1</fullName>
        <ecNumber evidence="2">2.5.1.18</ecNumber>
    </recommendedName>
    <alternativeName>
        <fullName>GST 3-3</fullName>
    </alternativeName>
    <alternativeName>
        <fullName>GSTM1-1</fullName>
    </alternativeName>
    <alternativeName>
        <fullName>Glutathione S-transferase Yb-1</fullName>
        <shortName>GST Yb1</shortName>
    </alternativeName>
</protein>
<feature type="initiator methionine" description="Removed" evidence="3 6 7 8 9 11">
    <location>
        <position position="1"/>
    </location>
</feature>
<feature type="chain" id="PRO_0000185831" description="Glutathione S-transferase Mu 1">
    <location>
        <begin position="2"/>
        <end position="218"/>
    </location>
</feature>
<feature type="domain" description="GST N-terminal">
    <location>
        <begin position="2"/>
        <end position="88"/>
    </location>
</feature>
<feature type="domain" description="GST C-terminal">
    <location>
        <begin position="90"/>
        <end position="208"/>
    </location>
</feature>
<feature type="binding site" evidence="12 14">
    <location>
        <begin position="7"/>
        <end position="8"/>
    </location>
    <ligand>
        <name>glutathione</name>
        <dbReference type="ChEBI" id="CHEBI:57925"/>
    </ligand>
</feature>
<feature type="binding site" evidence="12 14">
    <location>
        <begin position="43"/>
        <end position="46"/>
    </location>
    <ligand>
        <name>glutathione</name>
        <dbReference type="ChEBI" id="CHEBI:57925"/>
    </ligand>
</feature>
<feature type="binding site" evidence="12 14">
    <location>
        <position position="50"/>
    </location>
    <ligand>
        <name>glutathione</name>
        <dbReference type="ChEBI" id="CHEBI:57925"/>
    </ligand>
</feature>
<feature type="binding site" evidence="12 14">
    <location>
        <begin position="59"/>
        <end position="60"/>
    </location>
    <ligand>
        <name>glutathione</name>
        <dbReference type="ChEBI" id="CHEBI:57925"/>
    </ligand>
</feature>
<feature type="binding site" evidence="12 14">
    <location>
        <begin position="72"/>
        <end position="73"/>
    </location>
    <ligand>
        <name>glutathione</name>
        <dbReference type="ChEBI" id="CHEBI:57925"/>
    </ligand>
</feature>
<feature type="binding site" evidence="1">
    <location>
        <position position="116"/>
    </location>
    <ligand>
        <name>substrate</name>
    </ligand>
</feature>
<feature type="modified residue" description="Phosphoserine" evidence="17">
    <location>
        <position position="67"/>
    </location>
</feature>
<feature type="modified residue" description="Phosphoserine" evidence="17">
    <location>
        <position position="205"/>
    </location>
</feature>
<feature type="modified residue" description="Phosphoserine" evidence="17">
    <location>
        <position position="210"/>
    </location>
</feature>
<feature type="mutagenesis site" description="Reduces catalytic activity about 100-fold." evidence="12">
    <original>Y</original>
    <variation>F</variation>
    <variation>L</variation>
    <location>
        <position position="7"/>
    </location>
</feature>
<feature type="mutagenesis site" description="No change in activity." evidence="5">
    <original>C</original>
    <variation>S</variation>
    <location>
        <position position="87"/>
    </location>
</feature>
<feature type="mutagenesis site" description="Reduces enzyme activity about 100-fold." evidence="10">
    <original>Y</original>
    <variation>F</variation>
    <location>
        <position position="116"/>
    </location>
</feature>
<feature type="sequence conflict" description="In Ref. 2; AAA41287." evidence="13" ref="2">
    <original>KS</original>
    <variation>NC</variation>
    <location>
        <begin position="199"/>
        <end position="200"/>
    </location>
</feature>
<feature type="strand" evidence="18">
    <location>
        <begin position="3"/>
        <end position="10"/>
    </location>
</feature>
<feature type="turn" evidence="18">
    <location>
        <begin position="12"/>
        <end position="14"/>
    </location>
</feature>
<feature type="helix" evidence="18">
    <location>
        <begin position="15"/>
        <end position="23"/>
    </location>
</feature>
<feature type="strand" evidence="18">
    <location>
        <begin position="28"/>
        <end position="33"/>
    </location>
</feature>
<feature type="turn" evidence="18">
    <location>
        <begin position="38"/>
        <end position="41"/>
    </location>
</feature>
<feature type="helix" evidence="18">
    <location>
        <begin position="44"/>
        <end position="47"/>
    </location>
</feature>
<feature type="turn" evidence="18">
    <location>
        <begin position="48"/>
        <end position="51"/>
    </location>
</feature>
<feature type="strand" evidence="18">
    <location>
        <begin position="60"/>
        <end position="65"/>
    </location>
</feature>
<feature type="strand" evidence="18">
    <location>
        <begin position="68"/>
        <end position="72"/>
    </location>
</feature>
<feature type="helix" evidence="18">
    <location>
        <begin position="73"/>
        <end position="83"/>
    </location>
</feature>
<feature type="helix" evidence="18">
    <location>
        <begin position="91"/>
        <end position="115"/>
    </location>
</feature>
<feature type="helix" evidence="18">
    <location>
        <begin position="120"/>
        <end position="142"/>
    </location>
</feature>
<feature type="strand" evidence="18">
    <location>
        <begin position="146"/>
        <end position="152"/>
    </location>
</feature>
<feature type="helix" evidence="18">
    <location>
        <begin position="155"/>
        <end position="170"/>
    </location>
</feature>
<feature type="turn" evidence="18">
    <location>
        <begin position="172"/>
        <end position="175"/>
    </location>
</feature>
<feature type="helix" evidence="18">
    <location>
        <begin position="179"/>
        <end position="189"/>
    </location>
</feature>
<feature type="helix" evidence="18">
    <location>
        <begin position="192"/>
        <end position="198"/>
    </location>
</feature>
<feature type="strand" evidence="19">
    <location>
        <begin position="200"/>
        <end position="202"/>
    </location>
</feature>
<feature type="strand" evidence="18">
    <location>
        <begin position="213"/>
        <end position="216"/>
    </location>
</feature>
<evidence type="ECO:0000250" key="1"/>
<evidence type="ECO:0000250" key="2">
    <source>
        <dbReference type="UniProtKB" id="P09488"/>
    </source>
</evidence>
<evidence type="ECO:0000269" key="3">
    <source>
    </source>
</evidence>
<evidence type="ECO:0000269" key="4">
    <source>
    </source>
</evidence>
<evidence type="ECO:0000269" key="5">
    <source>
    </source>
</evidence>
<evidence type="ECO:0000269" key="6">
    <source>
    </source>
</evidence>
<evidence type="ECO:0000269" key="7">
    <source>
    </source>
</evidence>
<evidence type="ECO:0000269" key="8">
    <source>
    </source>
</evidence>
<evidence type="ECO:0000269" key="9">
    <source>
    </source>
</evidence>
<evidence type="ECO:0000269" key="10">
    <source>
    </source>
</evidence>
<evidence type="ECO:0000269" key="11">
    <source>
    </source>
</evidence>
<evidence type="ECO:0000269" key="12">
    <source>
    </source>
</evidence>
<evidence type="ECO:0000305" key="13"/>
<evidence type="ECO:0000305" key="14">
    <source>
    </source>
</evidence>
<evidence type="ECO:0000305" key="15">
    <source>
    </source>
</evidence>
<evidence type="ECO:0000312" key="16">
    <source>
        <dbReference type="RGD" id="2755"/>
    </source>
</evidence>
<evidence type="ECO:0007744" key="17">
    <source>
    </source>
</evidence>
<evidence type="ECO:0007829" key="18">
    <source>
        <dbReference type="PDB" id="6GSV"/>
    </source>
</evidence>
<evidence type="ECO:0007829" key="19">
    <source>
        <dbReference type="PDB" id="6GSX"/>
    </source>
</evidence>
<sequence>MPMILGYWNVRGLTHPIRLLLEYTDSSYEEKRYAMGDAPDYDRSQWLNEKFKLGLDFPNLPYLIDGSRKITQSNAIMRYLARKHHLCGETEEERIRADIVENQVMDNRMQLIMLCYNPDFEKQKPEFLKTIPEKMKLYSEFLGKRPWFAGDKVTYVDFLAYDILDQYHIFEPKCLDAFPNLKDFLARFEGLKKISAYMKSSRYLSTPIFSKLAQWSNK</sequence>
<name>GSTM1_RAT</name>